<evidence type="ECO:0000255" key="1">
    <source>
        <dbReference type="HAMAP-Rule" id="MF_00356"/>
    </source>
</evidence>
<sequence length="1463" mass="164776">MSNSFEILMNQLGMPAEMRQAPALAQANIERVVVHKISKVWEFHFVFSNILPIEIFLELKKGLSEEFSKTGNKAVFEIKARSQEFSNQLLQSYYREAFSEGPCASQGFKSLYQNLQVRAEGNQLFIEGSEAIDKEHFKKNHLPNLAKQLEKFGFPTFNCQVEKNDVLTQEQEEAFHAENEQIVQAANEEALRAMEQLEQMAPPPAEEKPVFDFQAKKAAAKPKLDKAEITPMIEVTTEENRLVFEGVVFDVEQKVTRTGRVLINFKMTDYTSSFSMQKWVKNEEEAQKFDLIKKNSWLRVRGNVEMNNFTRDLTMNVQDLQEVVHYERKDLMPEGERRVEFHAHTNMSTMDALPEVEEIVATAAKWGHKAVAITDHGNVQSFPHGYKAAKKAGIQLIYGIEANIVEDRVPIVYNEVEMDLSEATYVVFDVETTGLSAIYNDLIQVAASKMYKGNVIAEFDEFINPGHPLSAFTTELTGITDDHVKNAKPLEQVLQEFQEFCKDTVLVAHNATFDVGFMNANYERHDLPKISQPVIDTLEFARNLYPEYKRHGLGPLTKRFGVALEHHHMANYDAEATGRLLFIFIKEVAEKHGVTDLARLNIDLISPDSYKKARIKHATIYVKNQVGLKNIFKLVSLSNTKYFEGVSRIPRTVLDAHREGLILGSACSEGEVFDVVVSQGVDAAVEVAKYYDFIEVMPPAIYAPLIAKEQVKDMEELQTIIKSLIEVGDRLGKPVLATGNVHYIEPEEEIYREIIVRSLGQGAMINRTIGHGEHAQPAPLPKAHFRTTNEMLDEFAFLGEELARKLVIENTNALAEIFEPVEVVKGDLYTPFIDKAEETVAELTYKKAFEIYGNPLPDIVDLRIEKELTSILGNGFAVIYLASQMLVQRSNERGYLVGSRGSVGSSFVATMIGITEVNPLSPHYVCGQCQYSEFITDGSYGSGFDMPHKDCPNCGHKLSKNGQDIPFETFLGFDGDKVPDIDLNFSGEDQPSAHLDVRDIFGEEYAFRAGTVGTVAAKTAYGFVKGYERDYGKFYRDAEVERLAQGAAGVKRTTGQHPGGIVVIPNYMDVYDFTPVQYPADDVTAEWQTTHFNFHDIDENVLKLDVLGHDDPTMIRKLQDLSGIDPNKIPMDDEGVMALFSGTDVLGVTPEQIGTPTGMLGIPEFGTNFVRGMVDETHPTTFAELLQLSGLSHGTDVWLGNAQDLIKQGIADLSTVIGCRDDIMVYLMHAGLEPKMAFTIMERVRKGLWLKISEEERNGYIEAMKANKVPEWYIESCGKIKYMFPKAHAAAYVMMALRVAYFKVHHPIYYYCAYFSIRAKAFDIKTMGAGLEAIKRRMEEISEKRKNNEASNVEIDLYTTLEIVNEMWERGFKFGKLDLYRSQATEFLIDGDTLIPPFVAMDGLGENVAKQLVRAREEGEFLSKTELRKRGGLSSTLVEKMDEMGILGNMPEDNQLSLFDELF</sequence>
<protein>
    <recommendedName>
        <fullName evidence="1">DNA polymerase III PolC-type</fullName>
        <shortName evidence="1">PolIII</shortName>
        <ecNumber evidence="1">2.7.7.7</ecNumber>
    </recommendedName>
</protein>
<gene>
    <name evidence="1" type="primary">polC</name>
    <name type="ordered locus">SPD_0254</name>
</gene>
<accession>Q04MH6</accession>
<feature type="chain" id="PRO_1000048483" description="DNA polymerase III PolC-type">
    <location>
        <begin position="1"/>
        <end position="1463"/>
    </location>
</feature>
<feature type="domain" description="Exonuclease">
    <location>
        <begin position="425"/>
        <end position="581"/>
    </location>
</feature>
<dbReference type="EC" id="2.7.7.7" evidence="1"/>
<dbReference type="EMBL" id="CP000410">
    <property type="protein sequence ID" value="ABJ54142.1"/>
    <property type="molecule type" value="Genomic_DNA"/>
</dbReference>
<dbReference type="RefSeq" id="WP_000071396.1">
    <property type="nucleotide sequence ID" value="NZ_JAMLJR010000002.1"/>
</dbReference>
<dbReference type="SMR" id="Q04MH6"/>
<dbReference type="PaxDb" id="373153-SPD_0254"/>
<dbReference type="KEGG" id="spd:SPD_0254"/>
<dbReference type="eggNOG" id="COG2176">
    <property type="taxonomic scope" value="Bacteria"/>
</dbReference>
<dbReference type="HOGENOM" id="CLU_003297_2_0_9"/>
<dbReference type="BioCyc" id="SPNE373153:G1G6V-279-MONOMER"/>
<dbReference type="Proteomes" id="UP000001452">
    <property type="component" value="Chromosome"/>
</dbReference>
<dbReference type="GO" id="GO:0005737">
    <property type="term" value="C:cytoplasm"/>
    <property type="evidence" value="ECO:0007669"/>
    <property type="project" value="UniProtKB-SubCell"/>
</dbReference>
<dbReference type="GO" id="GO:0008408">
    <property type="term" value="F:3'-5' exonuclease activity"/>
    <property type="evidence" value="ECO:0007669"/>
    <property type="project" value="UniProtKB-UniRule"/>
</dbReference>
<dbReference type="GO" id="GO:0003677">
    <property type="term" value="F:DNA binding"/>
    <property type="evidence" value="ECO:0007669"/>
    <property type="project" value="UniProtKB-UniRule"/>
</dbReference>
<dbReference type="GO" id="GO:0003887">
    <property type="term" value="F:DNA-directed DNA polymerase activity"/>
    <property type="evidence" value="ECO:0007669"/>
    <property type="project" value="UniProtKB-UniRule"/>
</dbReference>
<dbReference type="GO" id="GO:0006261">
    <property type="term" value="P:DNA-templated DNA replication"/>
    <property type="evidence" value="ECO:0007669"/>
    <property type="project" value="UniProtKB-UniRule"/>
</dbReference>
<dbReference type="CDD" id="cd06127">
    <property type="entry name" value="DEDDh"/>
    <property type="match status" value="1"/>
</dbReference>
<dbReference type="CDD" id="cd07435">
    <property type="entry name" value="PHP_PolIIIA_POLC"/>
    <property type="match status" value="1"/>
</dbReference>
<dbReference type="CDD" id="cd04484">
    <property type="entry name" value="polC_OBF"/>
    <property type="match status" value="1"/>
</dbReference>
<dbReference type="FunFam" id="3.30.420.10:FF:000045">
    <property type="entry name" value="3'-5' exonuclease DinG"/>
    <property type="match status" value="1"/>
</dbReference>
<dbReference type="Gene3D" id="1.10.150.870">
    <property type="match status" value="1"/>
</dbReference>
<dbReference type="Gene3D" id="3.30.1900.20">
    <property type="match status" value="1"/>
</dbReference>
<dbReference type="Gene3D" id="6.10.140.1510">
    <property type="match status" value="1"/>
</dbReference>
<dbReference type="Gene3D" id="3.20.20.140">
    <property type="entry name" value="Metal-dependent hydrolases"/>
    <property type="match status" value="1"/>
</dbReference>
<dbReference type="Gene3D" id="2.40.50.140">
    <property type="entry name" value="Nucleic acid-binding proteins"/>
    <property type="match status" value="1"/>
</dbReference>
<dbReference type="Gene3D" id="1.10.150.700">
    <property type="entry name" value="PolC, middle finger domain"/>
    <property type="match status" value="1"/>
</dbReference>
<dbReference type="Gene3D" id="3.30.420.10">
    <property type="entry name" value="Ribonuclease H-like superfamily/Ribonuclease H"/>
    <property type="match status" value="1"/>
</dbReference>
<dbReference type="HAMAP" id="MF_00356">
    <property type="entry name" value="DNApol_PolC"/>
    <property type="match status" value="1"/>
</dbReference>
<dbReference type="InterPro" id="IPR011708">
    <property type="entry name" value="DNA_pol3_alpha_NTPase_dom"/>
</dbReference>
<dbReference type="InterPro" id="IPR040982">
    <property type="entry name" value="DNA_pol3_finger"/>
</dbReference>
<dbReference type="InterPro" id="IPR024754">
    <property type="entry name" value="DNA_PolC-like_N_II"/>
</dbReference>
<dbReference type="InterPro" id="IPR028112">
    <property type="entry name" value="DNA_PolC-type_N_I"/>
</dbReference>
<dbReference type="InterPro" id="IPR004805">
    <property type="entry name" value="DnaE2/DnaE/PolC"/>
</dbReference>
<dbReference type="InterPro" id="IPR029460">
    <property type="entry name" value="DNAPol_HHH"/>
</dbReference>
<dbReference type="InterPro" id="IPR006054">
    <property type="entry name" value="DnaQ"/>
</dbReference>
<dbReference type="InterPro" id="IPR013520">
    <property type="entry name" value="Exonuclease_RNaseT/DNA_pol3"/>
</dbReference>
<dbReference type="InterPro" id="IPR012340">
    <property type="entry name" value="NA-bd_OB-fold"/>
</dbReference>
<dbReference type="InterPro" id="IPR004013">
    <property type="entry name" value="PHP_dom"/>
</dbReference>
<dbReference type="InterPro" id="IPR003141">
    <property type="entry name" value="Pol/His_phosphatase_N"/>
</dbReference>
<dbReference type="InterPro" id="IPR016195">
    <property type="entry name" value="Pol/histidinol_Pase-like"/>
</dbReference>
<dbReference type="InterPro" id="IPR006308">
    <property type="entry name" value="Pol_III_a_PolC-type_gram_pos"/>
</dbReference>
<dbReference type="InterPro" id="IPR044923">
    <property type="entry name" value="PolC_middle_finger_sf"/>
</dbReference>
<dbReference type="InterPro" id="IPR012337">
    <property type="entry name" value="RNaseH-like_sf"/>
</dbReference>
<dbReference type="InterPro" id="IPR036397">
    <property type="entry name" value="RNaseH_sf"/>
</dbReference>
<dbReference type="NCBIfam" id="TIGR00573">
    <property type="entry name" value="dnaq"/>
    <property type="match status" value="1"/>
</dbReference>
<dbReference type="NCBIfam" id="TIGR01405">
    <property type="entry name" value="polC_Gram_pos"/>
    <property type="match status" value="1"/>
</dbReference>
<dbReference type="NCBIfam" id="NF001688">
    <property type="entry name" value="PRK00448.1"/>
    <property type="match status" value="1"/>
</dbReference>
<dbReference type="PANTHER" id="PTHR32294:SF5">
    <property type="entry name" value="DNA POLYMERASE III POLC-TYPE"/>
    <property type="match status" value="1"/>
</dbReference>
<dbReference type="PANTHER" id="PTHR32294">
    <property type="entry name" value="DNA POLYMERASE III SUBUNIT ALPHA"/>
    <property type="match status" value="1"/>
</dbReference>
<dbReference type="Pfam" id="PF14480">
    <property type="entry name" value="DNA_pol3_a_NI"/>
    <property type="match status" value="1"/>
</dbReference>
<dbReference type="Pfam" id="PF11490">
    <property type="entry name" value="DNA_pol3_a_NII"/>
    <property type="match status" value="1"/>
</dbReference>
<dbReference type="Pfam" id="PF07733">
    <property type="entry name" value="DNA_pol3_alpha"/>
    <property type="match status" value="2"/>
</dbReference>
<dbReference type="Pfam" id="PF17657">
    <property type="entry name" value="DNA_pol3_finger"/>
    <property type="match status" value="1"/>
</dbReference>
<dbReference type="Pfam" id="PF14579">
    <property type="entry name" value="HHH_6"/>
    <property type="match status" value="1"/>
</dbReference>
<dbReference type="Pfam" id="PF02811">
    <property type="entry name" value="PHP"/>
    <property type="match status" value="1"/>
</dbReference>
<dbReference type="Pfam" id="PF00929">
    <property type="entry name" value="RNase_T"/>
    <property type="match status" value="1"/>
</dbReference>
<dbReference type="SMART" id="SM00479">
    <property type="entry name" value="EXOIII"/>
    <property type="match status" value="1"/>
</dbReference>
<dbReference type="SMART" id="SM00481">
    <property type="entry name" value="POLIIIAc"/>
    <property type="match status" value="1"/>
</dbReference>
<dbReference type="SUPFAM" id="SSF50249">
    <property type="entry name" value="Nucleic acid-binding proteins"/>
    <property type="match status" value="1"/>
</dbReference>
<dbReference type="SUPFAM" id="SSF89550">
    <property type="entry name" value="PHP domain-like"/>
    <property type="match status" value="1"/>
</dbReference>
<dbReference type="SUPFAM" id="SSF53098">
    <property type="entry name" value="Ribonuclease H-like"/>
    <property type="match status" value="1"/>
</dbReference>
<keyword id="KW-0963">Cytoplasm</keyword>
<keyword id="KW-0235">DNA replication</keyword>
<keyword id="KW-0239">DNA-directed DNA polymerase</keyword>
<keyword id="KW-0269">Exonuclease</keyword>
<keyword id="KW-0378">Hydrolase</keyword>
<keyword id="KW-0540">Nuclease</keyword>
<keyword id="KW-0548">Nucleotidyltransferase</keyword>
<keyword id="KW-1185">Reference proteome</keyword>
<keyword id="KW-0808">Transferase</keyword>
<reference key="1">
    <citation type="journal article" date="2007" name="J. Bacteriol.">
        <title>Genome sequence of Avery's virulent serotype 2 strain D39 of Streptococcus pneumoniae and comparison with that of unencapsulated laboratory strain R6.</title>
        <authorList>
            <person name="Lanie J.A."/>
            <person name="Ng W.-L."/>
            <person name="Kazmierczak K.M."/>
            <person name="Andrzejewski T.M."/>
            <person name="Davidsen T.M."/>
            <person name="Wayne K.J."/>
            <person name="Tettelin H."/>
            <person name="Glass J.I."/>
            <person name="Winkler M.E."/>
        </authorList>
    </citation>
    <scope>NUCLEOTIDE SEQUENCE [LARGE SCALE GENOMIC DNA]</scope>
    <source>
        <strain>D39 / NCTC 7466</strain>
    </source>
</reference>
<proteinExistence type="inferred from homology"/>
<name>DPO3_STRP2</name>
<organism>
    <name type="scientific">Streptococcus pneumoniae serotype 2 (strain D39 / NCTC 7466)</name>
    <dbReference type="NCBI Taxonomy" id="373153"/>
    <lineage>
        <taxon>Bacteria</taxon>
        <taxon>Bacillati</taxon>
        <taxon>Bacillota</taxon>
        <taxon>Bacilli</taxon>
        <taxon>Lactobacillales</taxon>
        <taxon>Streptococcaceae</taxon>
        <taxon>Streptococcus</taxon>
    </lineage>
</organism>
<comment type="function">
    <text evidence="1">Required for replicative DNA synthesis. This DNA polymerase also exhibits 3' to 5' exonuclease activity.</text>
</comment>
<comment type="catalytic activity">
    <reaction evidence="1">
        <text>DNA(n) + a 2'-deoxyribonucleoside 5'-triphosphate = DNA(n+1) + diphosphate</text>
        <dbReference type="Rhea" id="RHEA:22508"/>
        <dbReference type="Rhea" id="RHEA-COMP:17339"/>
        <dbReference type="Rhea" id="RHEA-COMP:17340"/>
        <dbReference type="ChEBI" id="CHEBI:33019"/>
        <dbReference type="ChEBI" id="CHEBI:61560"/>
        <dbReference type="ChEBI" id="CHEBI:173112"/>
        <dbReference type="EC" id="2.7.7.7"/>
    </reaction>
</comment>
<comment type="subcellular location">
    <subcellularLocation>
        <location evidence="1">Cytoplasm</location>
    </subcellularLocation>
</comment>
<comment type="similarity">
    <text evidence="1">Belongs to the DNA polymerase type-C family. PolC subfamily.</text>
</comment>